<reference key="1">
    <citation type="journal article" date="2004" name="Nat. Genet.">
        <title>Comparison of genome degradation in Paratyphi A and Typhi, human-restricted serovars of Salmonella enterica that cause typhoid.</title>
        <authorList>
            <person name="McClelland M."/>
            <person name="Sanderson K.E."/>
            <person name="Clifton S.W."/>
            <person name="Latreille P."/>
            <person name="Porwollik S."/>
            <person name="Sabo A."/>
            <person name="Meyer R."/>
            <person name="Bieri T."/>
            <person name="Ozersky P."/>
            <person name="McLellan M."/>
            <person name="Harkins C.R."/>
            <person name="Wang C."/>
            <person name="Nguyen C."/>
            <person name="Berghoff A."/>
            <person name="Elliott G."/>
            <person name="Kohlberg S."/>
            <person name="Strong C."/>
            <person name="Du F."/>
            <person name="Carter J."/>
            <person name="Kremizki C."/>
            <person name="Layman D."/>
            <person name="Leonard S."/>
            <person name="Sun H."/>
            <person name="Fulton L."/>
            <person name="Nash W."/>
            <person name="Miner T."/>
            <person name="Minx P."/>
            <person name="Delehaunty K."/>
            <person name="Fronick C."/>
            <person name="Magrini V."/>
            <person name="Nhan M."/>
            <person name="Warren W."/>
            <person name="Florea L."/>
            <person name="Spieth J."/>
            <person name="Wilson R.K."/>
        </authorList>
    </citation>
    <scope>NUCLEOTIDE SEQUENCE [LARGE SCALE GENOMIC DNA]</scope>
    <source>
        <strain>ATCC 9150 / SARB42</strain>
    </source>
</reference>
<comment type="function">
    <text evidence="1">NDH-1 shuttles electrons from NADH, via FMN and iron-sulfur (Fe-S) centers, to quinones in the respiratory chain. The immediate electron acceptor for the enzyme in this species is believed to be ubiquinone. Couples the redox reaction to proton translocation (for every two electrons transferred, four hydrogen ions are translocated across the cytoplasmic membrane), and thus conserves the redox energy in a proton gradient.</text>
</comment>
<comment type="catalytic activity">
    <reaction evidence="1">
        <text>a quinone + NADH + 5 H(+)(in) = a quinol + NAD(+) + 4 H(+)(out)</text>
        <dbReference type="Rhea" id="RHEA:57888"/>
        <dbReference type="ChEBI" id="CHEBI:15378"/>
        <dbReference type="ChEBI" id="CHEBI:24646"/>
        <dbReference type="ChEBI" id="CHEBI:57540"/>
        <dbReference type="ChEBI" id="CHEBI:57945"/>
        <dbReference type="ChEBI" id="CHEBI:132124"/>
    </reaction>
</comment>
<comment type="subunit">
    <text evidence="1">NDH-1 is composed of 13 different subunits. Subunits NuoA, H, J, K, L, M, N constitute the membrane sector of the complex.</text>
</comment>
<comment type="subcellular location">
    <subcellularLocation>
        <location evidence="1">Cell inner membrane</location>
        <topology evidence="1">Multi-pass membrane protein</topology>
    </subcellularLocation>
</comment>
<comment type="similarity">
    <text evidence="1">Belongs to the complex I subunit 3 family.</text>
</comment>
<evidence type="ECO:0000255" key="1">
    <source>
        <dbReference type="HAMAP-Rule" id="MF_01394"/>
    </source>
</evidence>
<feature type="chain" id="PRO_0000362771" description="NADH-quinone oxidoreductase subunit A">
    <location>
        <begin position="1"/>
        <end position="147"/>
    </location>
</feature>
<feature type="transmembrane region" description="Helical" evidence="1">
    <location>
        <begin position="16"/>
        <end position="36"/>
    </location>
</feature>
<feature type="transmembrane region" description="Helical" evidence="1">
    <location>
        <begin position="68"/>
        <end position="88"/>
    </location>
</feature>
<feature type="transmembrane region" description="Helical" evidence="1">
    <location>
        <begin position="97"/>
        <end position="117"/>
    </location>
</feature>
<gene>
    <name evidence="1" type="primary">nuoA</name>
    <name type="ordered locus">SPA0536</name>
</gene>
<proteinExistence type="inferred from homology"/>
<protein>
    <recommendedName>
        <fullName evidence="1">NADH-quinone oxidoreductase subunit A</fullName>
        <ecNumber evidence="1">7.1.1.-</ecNumber>
    </recommendedName>
    <alternativeName>
        <fullName evidence="1">NADH dehydrogenase I subunit A</fullName>
    </alternativeName>
    <alternativeName>
        <fullName evidence="1">NDH-1 subunit A</fullName>
    </alternativeName>
    <alternativeName>
        <fullName evidence="1">NUO1</fullName>
    </alternativeName>
</protein>
<organism>
    <name type="scientific">Salmonella paratyphi A (strain ATCC 9150 / SARB42)</name>
    <dbReference type="NCBI Taxonomy" id="295319"/>
    <lineage>
        <taxon>Bacteria</taxon>
        <taxon>Pseudomonadati</taxon>
        <taxon>Pseudomonadota</taxon>
        <taxon>Gammaproteobacteria</taxon>
        <taxon>Enterobacterales</taxon>
        <taxon>Enterobacteriaceae</taxon>
        <taxon>Salmonella</taxon>
    </lineage>
</organism>
<accession>Q5PN55</accession>
<sequence>MSMSTSTEVIAHHWAFAIFLIVAIGLCCLMLVGGWFLGGRARARHKNVPFESGIDSVGTARLRLSAKFYLVAMFFVIFDVEALYLFAWSTSIRESGWVGFVEAAIFIFVLLAGLVYLARIGALDWTPARSRRERMNPETNSIANRQR</sequence>
<keyword id="KW-0997">Cell inner membrane</keyword>
<keyword id="KW-1003">Cell membrane</keyword>
<keyword id="KW-0472">Membrane</keyword>
<keyword id="KW-0520">NAD</keyword>
<keyword id="KW-0874">Quinone</keyword>
<keyword id="KW-1278">Translocase</keyword>
<keyword id="KW-0812">Transmembrane</keyword>
<keyword id="KW-1133">Transmembrane helix</keyword>
<keyword id="KW-0813">Transport</keyword>
<keyword id="KW-0830">Ubiquinone</keyword>
<name>NUOA_SALPA</name>
<dbReference type="EC" id="7.1.1.-" evidence="1"/>
<dbReference type="EMBL" id="CP000026">
    <property type="protein sequence ID" value="AAV76538.1"/>
    <property type="molecule type" value="Genomic_DNA"/>
</dbReference>
<dbReference type="RefSeq" id="WP_000062993.1">
    <property type="nucleotide sequence ID" value="NC_006511.1"/>
</dbReference>
<dbReference type="SMR" id="Q5PN55"/>
<dbReference type="GeneID" id="66756777"/>
<dbReference type="KEGG" id="spt:SPA0536"/>
<dbReference type="HOGENOM" id="CLU_119549_2_0_6"/>
<dbReference type="Proteomes" id="UP000008185">
    <property type="component" value="Chromosome"/>
</dbReference>
<dbReference type="GO" id="GO:0030964">
    <property type="term" value="C:NADH dehydrogenase complex"/>
    <property type="evidence" value="ECO:0007669"/>
    <property type="project" value="TreeGrafter"/>
</dbReference>
<dbReference type="GO" id="GO:0005886">
    <property type="term" value="C:plasma membrane"/>
    <property type="evidence" value="ECO:0007669"/>
    <property type="project" value="UniProtKB-SubCell"/>
</dbReference>
<dbReference type="GO" id="GO:0008137">
    <property type="term" value="F:NADH dehydrogenase (ubiquinone) activity"/>
    <property type="evidence" value="ECO:0007669"/>
    <property type="project" value="InterPro"/>
</dbReference>
<dbReference type="GO" id="GO:0050136">
    <property type="term" value="F:NADH:ubiquinone reductase (non-electrogenic) activity"/>
    <property type="evidence" value="ECO:0007669"/>
    <property type="project" value="UniProtKB-UniRule"/>
</dbReference>
<dbReference type="GO" id="GO:0048038">
    <property type="term" value="F:quinone binding"/>
    <property type="evidence" value="ECO:0007669"/>
    <property type="project" value="UniProtKB-KW"/>
</dbReference>
<dbReference type="FunFam" id="1.20.58.1610:FF:000003">
    <property type="entry name" value="NADH-quinone oxidoreductase subunit A"/>
    <property type="match status" value="1"/>
</dbReference>
<dbReference type="Gene3D" id="1.20.58.1610">
    <property type="entry name" value="NADH:ubiquinone/plastoquinone oxidoreductase, chain 3"/>
    <property type="match status" value="1"/>
</dbReference>
<dbReference type="HAMAP" id="MF_01394">
    <property type="entry name" value="NDH1_NuoA"/>
    <property type="match status" value="1"/>
</dbReference>
<dbReference type="InterPro" id="IPR023043">
    <property type="entry name" value="NAD(P)H_OxRDtase_bac/plastid"/>
</dbReference>
<dbReference type="InterPro" id="IPR000440">
    <property type="entry name" value="NADH_UbQ/plastoQ_OxRdtase_su3"/>
</dbReference>
<dbReference type="InterPro" id="IPR038430">
    <property type="entry name" value="NDAH_ubi_oxred_su3_sf"/>
</dbReference>
<dbReference type="PANTHER" id="PTHR11058:SF21">
    <property type="entry name" value="NADH-QUINONE OXIDOREDUCTASE SUBUNIT A"/>
    <property type="match status" value="1"/>
</dbReference>
<dbReference type="PANTHER" id="PTHR11058">
    <property type="entry name" value="NADH-UBIQUINONE OXIDOREDUCTASE CHAIN 3"/>
    <property type="match status" value="1"/>
</dbReference>
<dbReference type="Pfam" id="PF00507">
    <property type="entry name" value="Oxidored_q4"/>
    <property type="match status" value="1"/>
</dbReference>